<protein>
    <recommendedName>
        <fullName evidence="1">Adenylosuccinate synthetase</fullName>
        <shortName evidence="1">AMPSase</shortName>
        <shortName evidence="1">AdSS</shortName>
        <ecNumber evidence="1">6.3.4.4</ecNumber>
    </recommendedName>
    <alternativeName>
        <fullName evidence="1">IMP--aspartate ligase</fullName>
    </alternativeName>
</protein>
<organism>
    <name type="scientific">Exiguobacterium sp. (strain ATCC BAA-1283 / AT1b)</name>
    <dbReference type="NCBI Taxonomy" id="360911"/>
    <lineage>
        <taxon>Bacteria</taxon>
        <taxon>Bacillati</taxon>
        <taxon>Bacillota</taxon>
        <taxon>Bacilli</taxon>
        <taxon>Bacillales</taxon>
        <taxon>Bacillales Family XII. Incertae Sedis</taxon>
        <taxon>Exiguobacterium</taxon>
    </lineage>
</organism>
<reference key="1">
    <citation type="journal article" date="2011" name="J. Bacteriol.">
        <title>Complete genome sequence of the Thermophilic Bacterium Exiguobacterium sp. AT1b.</title>
        <authorList>
            <person name="Vishnivetskaya T.A."/>
            <person name="Lucas S."/>
            <person name="Copeland A."/>
            <person name="Lapidus A."/>
            <person name="Glavina del Rio T."/>
            <person name="Dalin E."/>
            <person name="Tice H."/>
            <person name="Bruce D.C."/>
            <person name="Goodwin L.A."/>
            <person name="Pitluck S."/>
            <person name="Saunders E."/>
            <person name="Brettin T."/>
            <person name="Detter C."/>
            <person name="Han C."/>
            <person name="Larimer F."/>
            <person name="Land M.L."/>
            <person name="Hauser L.J."/>
            <person name="Kyrpides N.C."/>
            <person name="Ovchinnikova G."/>
            <person name="Kathariou S."/>
            <person name="Ramaley R.F."/>
            <person name="Rodrigues D.F."/>
            <person name="Hendrix C."/>
            <person name="Richardson P."/>
            <person name="Tiedje J.M."/>
        </authorList>
    </citation>
    <scope>NUCLEOTIDE SEQUENCE [LARGE SCALE GENOMIC DNA]</scope>
    <source>
        <strain>ATCC BAA-1283 / AT1b</strain>
    </source>
</reference>
<sequence length="429" mass="47832">MSSVVVVGTQWGDEGKGKITDFLSKQAEVVARYQGGDNAGHTIVFNDTKYKLHLIPSGIFYSDKTCVIGNGMVVNPKSLVTELAYLHERGVSTDNLRISNRAHIILPYHQLQDRLEEEAKGDAKVGTTLKGIGPAYMDKAARIGIRIADLLDKEVFAEKLKTVLELKNRMFVKMYEVDPIEFDDIFQEYYAYGQQFAKYVCDTSVVLNDSLDEEKKVLFEGAQGVLLDIDHGTYPFVTSSNAASGGVSSGAGIGPSKIHHVVGVCKAYTSRVGDGPFPTELDDEIGHTIREVGKEYGTTTGRPRRVGWFDSVVVRHSRRVSGITDLCLNSIDVLTGLETLKICTSYEYEGKHLDEYPPNFRVLEKCVPVYEELPGWTEDITGVRRFEDLPENAQRYVRRIEELTGIELLTFSVGPAREQTVILRDIYEA</sequence>
<keyword id="KW-0963">Cytoplasm</keyword>
<keyword id="KW-0342">GTP-binding</keyword>
<keyword id="KW-0436">Ligase</keyword>
<keyword id="KW-0460">Magnesium</keyword>
<keyword id="KW-0479">Metal-binding</keyword>
<keyword id="KW-0547">Nucleotide-binding</keyword>
<keyword id="KW-0658">Purine biosynthesis</keyword>
<dbReference type="EC" id="6.3.4.4" evidence="1"/>
<dbReference type="EMBL" id="CP001615">
    <property type="protein sequence ID" value="ACQ70677.1"/>
    <property type="molecule type" value="Genomic_DNA"/>
</dbReference>
<dbReference type="RefSeq" id="WP_015880236.1">
    <property type="nucleotide sequence ID" value="NC_012673.1"/>
</dbReference>
<dbReference type="SMR" id="C4L014"/>
<dbReference type="STRING" id="360911.EAT1b_1751"/>
<dbReference type="KEGG" id="eat:EAT1b_1751"/>
<dbReference type="eggNOG" id="COG0104">
    <property type="taxonomic scope" value="Bacteria"/>
</dbReference>
<dbReference type="HOGENOM" id="CLU_029848_0_0_9"/>
<dbReference type="OrthoDB" id="9807553at2"/>
<dbReference type="UniPathway" id="UPA00075">
    <property type="reaction ID" value="UER00335"/>
</dbReference>
<dbReference type="Proteomes" id="UP000000716">
    <property type="component" value="Chromosome"/>
</dbReference>
<dbReference type="GO" id="GO:0005737">
    <property type="term" value="C:cytoplasm"/>
    <property type="evidence" value="ECO:0007669"/>
    <property type="project" value="UniProtKB-SubCell"/>
</dbReference>
<dbReference type="GO" id="GO:0004019">
    <property type="term" value="F:adenylosuccinate synthase activity"/>
    <property type="evidence" value="ECO:0007669"/>
    <property type="project" value="UniProtKB-UniRule"/>
</dbReference>
<dbReference type="GO" id="GO:0005525">
    <property type="term" value="F:GTP binding"/>
    <property type="evidence" value="ECO:0007669"/>
    <property type="project" value="UniProtKB-UniRule"/>
</dbReference>
<dbReference type="GO" id="GO:0000287">
    <property type="term" value="F:magnesium ion binding"/>
    <property type="evidence" value="ECO:0007669"/>
    <property type="project" value="UniProtKB-UniRule"/>
</dbReference>
<dbReference type="GO" id="GO:0044208">
    <property type="term" value="P:'de novo' AMP biosynthetic process"/>
    <property type="evidence" value="ECO:0007669"/>
    <property type="project" value="UniProtKB-UniRule"/>
</dbReference>
<dbReference type="GO" id="GO:0046040">
    <property type="term" value="P:IMP metabolic process"/>
    <property type="evidence" value="ECO:0007669"/>
    <property type="project" value="TreeGrafter"/>
</dbReference>
<dbReference type="CDD" id="cd03108">
    <property type="entry name" value="AdSS"/>
    <property type="match status" value="1"/>
</dbReference>
<dbReference type="FunFam" id="1.10.300.10:FF:000001">
    <property type="entry name" value="Adenylosuccinate synthetase"/>
    <property type="match status" value="1"/>
</dbReference>
<dbReference type="FunFam" id="3.90.170.10:FF:000001">
    <property type="entry name" value="Adenylosuccinate synthetase"/>
    <property type="match status" value="1"/>
</dbReference>
<dbReference type="Gene3D" id="3.40.440.10">
    <property type="entry name" value="Adenylosuccinate Synthetase, subunit A, domain 1"/>
    <property type="match status" value="1"/>
</dbReference>
<dbReference type="Gene3D" id="1.10.300.10">
    <property type="entry name" value="Adenylosuccinate Synthetase, subunit A, domain 2"/>
    <property type="match status" value="1"/>
</dbReference>
<dbReference type="Gene3D" id="3.90.170.10">
    <property type="entry name" value="Adenylosuccinate Synthetase, subunit A, domain 3"/>
    <property type="match status" value="1"/>
</dbReference>
<dbReference type="HAMAP" id="MF_00011">
    <property type="entry name" value="Adenylosucc_synth"/>
    <property type="match status" value="1"/>
</dbReference>
<dbReference type="InterPro" id="IPR018220">
    <property type="entry name" value="Adenylosuccin_syn_GTP-bd"/>
</dbReference>
<dbReference type="InterPro" id="IPR033128">
    <property type="entry name" value="Adenylosuccin_syn_Lys_AS"/>
</dbReference>
<dbReference type="InterPro" id="IPR042109">
    <property type="entry name" value="Adenylosuccinate_synth_dom1"/>
</dbReference>
<dbReference type="InterPro" id="IPR042110">
    <property type="entry name" value="Adenylosuccinate_synth_dom2"/>
</dbReference>
<dbReference type="InterPro" id="IPR042111">
    <property type="entry name" value="Adenylosuccinate_synth_dom3"/>
</dbReference>
<dbReference type="InterPro" id="IPR001114">
    <property type="entry name" value="Adenylosuccinate_synthetase"/>
</dbReference>
<dbReference type="InterPro" id="IPR027417">
    <property type="entry name" value="P-loop_NTPase"/>
</dbReference>
<dbReference type="NCBIfam" id="NF002223">
    <property type="entry name" value="PRK01117.1"/>
    <property type="match status" value="1"/>
</dbReference>
<dbReference type="NCBIfam" id="TIGR00184">
    <property type="entry name" value="purA"/>
    <property type="match status" value="1"/>
</dbReference>
<dbReference type="PANTHER" id="PTHR11846">
    <property type="entry name" value="ADENYLOSUCCINATE SYNTHETASE"/>
    <property type="match status" value="1"/>
</dbReference>
<dbReference type="PANTHER" id="PTHR11846:SF0">
    <property type="entry name" value="ADENYLOSUCCINATE SYNTHETASE"/>
    <property type="match status" value="1"/>
</dbReference>
<dbReference type="Pfam" id="PF00709">
    <property type="entry name" value="Adenylsucc_synt"/>
    <property type="match status" value="1"/>
</dbReference>
<dbReference type="SMART" id="SM00788">
    <property type="entry name" value="Adenylsucc_synt"/>
    <property type="match status" value="1"/>
</dbReference>
<dbReference type="SUPFAM" id="SSF52540">
    <property type="entry name" value="P-loop containing nucleoside triphosphate hydrolases"/>
    <property type="match status" value="1"/>
</dbReference>
<dbReference type="PROSITE" id="PS01266">
    <property type="entry name" value="ADENYLOSUCCIN_SYN_1"/>
    <property type="match status" value="1"/>
</dbReference>
<dbReference type="PROSITE" id="PS00513">
    <property type="entry name" value="ADENYLOSUCCIN_SYN_2"/>
    <property type="match status" value="1"/>
</dbReference>
<accession>C4L014</accession>
<feature type="chain" id="PRO_1000201756" description="Adenylosuccinate synthetase">
    <location>
        <begin position="1"/>
        <end position="429"/>
    </location>
</feature>
<feature type="active site" description="Proton acceptor" evidence="1">
    <location>
        <position position="13"/>
    </location>
</feature>
<feature type="active site" description="Proton donor" evidence="1">
    <location>
        <position position="41"/>
    </location>
</feature>
<feature type="binding site" evidence="1">
    <location>
        <begin position="12"/>
        <end position="18"/>
    </location>
    <ligand>
        <name>GTP</name>
        <dbReference type="ChEBI" id="CHEBI:37565"/>
    </ligand>
</feature>
<feature type="binding site" description="in other chain" evidence="1">
    <location>
        <begin position="13"/>
        <end position="16"/>
    </location>
    <ligand>
        <name>IMP</name>
        <dbReference type="ChEBI" id="CHEBI:58053"/>
        <note>ligand shared between dimeric partners</note>
    </ligand>
</feature>
<feature type="binding site" evidence="1">
    <location>
        <position position="13"/>
    </location>
    <ligand>
        <name>Mg(2+)</name>
        <dbReference type="ChEBI" id="CHEBI:18420"/>
    </ligand>
</feature>
<feature type="binding site" description="in other chain" evidence="1">
    <location>
        <begin position="38"/>
        <end position="41"/>
    </location>
    <ligand>
        <name>IMP</name>
        <dbReference type="ChEBI" id="CHEBI:58053"/>
        <note>ligand shared between dimeric partners</note>
    </ligand>
</feature>
<feature type="binding site" evidence="1">
    <location>
        <begin position="40"/>
        <end position="42"/>
    </location>
    <ligand>
        <name>GTP</name>
        <dbReference type="ChEBI" id="CHEBI:37565"/>
    </ligand>
</feature>
<feature type="binding site" evidence="1">
    <location>
        <position position="40"/>
    </location>
    <ligand>
        <name>Mg(2+)</name>
        <dbReference type="ChEBI" id="CHEBI:18420"/>
    </ligand>
</feature>
<feature type="binding site" description="in other chain" evidence="1">
    <location>
        <position position="128"/>
    </location>
    <ligand>
        <name>IMP</name>
        <dbReference type="ChEBI" id="CHEBI:58053"/>
        <note>ligand shared between dimeric partners</note>
    </ligand>
</feature>
<feature type="binding site" evidence="1">
    <location>
        <position position="142"/>
    </location>
    <ligand>
        <name>IMP</name>
        <dbReference type="ChEBI" id="CHEBI:58053"/>
        <note>ligand shared between dimeric partners</note>
    </ligand>
</feature>
<feature type="binding site" description="in other chain" evidence="1">
    <location>
        <position position="223"/>
    </location>
    <ligand>
        <name>IMP</name>
        <dbReference type="ChEBI" id="CHEBI:58053"/>
        <note>ligand shared between dimeric partners</note>
    </ligand>
</feature>
<feature type="binding site" description="in other chain" evidence="1">
    <location>
        <position position="238"/>
    </location>
    <ligand>
        <name>IMP</name>
        <dbReference type="ChEBI" id="CHEBI:58053"/>
        <note>ligand shared between dimeric partners</note>
    </ligand>
</feature>
<feature type="binding site" evidence="1">
    <location>
        <begin position="298"/>
        <end position="304"/>
    </location>
    <ligand>
        <name>substrate</name>
    </ligand>
</feature>
<feature type="binding site" description="in other chain" evidence="1">
    <location>
        <position position="302"/>
    </location>
    <ligand>
        <name>IMP</name>
        <dbReference type="ChEBI" id="CHEBI:58053"/>
        <note>ligand shared between dimeric partners</note>
    </ligand>
</feature>
<feature type="binding site" evidence="1">
    <location>
        <position position="304"/>
    </location>
    <ligand>
        <name>GTP</name>
        <dbReference type="ChEBI" id="CHEBI:37565"/>
    </ligand>
</feature>
<feature type="binding site" evidence="1">
    <location>
        <begin position="330"/>
        <end position="332"/>
    </location>
    <ligand>
        <name>GTP</name>
        <dbReference type="ChEBI" id="CHEBI:37565"/>
    </ligand>
</feature>
<feature type="binding site" evidence="1">
    <location>
        <begin position="412"/>
        <end position="414"/>
    </location>
    <ligand>
        <name>GTP</name>
        <dbReference type="ChEBI" id="CHEBI:37565"/>
    </ligand>
</feature>
<comment type="function">
    <text evidence="1">Plays an important role in the de novo pathway of purine nucleotide biosynthesis. Catalyzes the first committed step in the biosynthesis of AMP from IMP.</text>
</comment>
<comment type="catalytic activity">
    <reaction evidence="1">
        <text>IMP + L-aspartate + GTP = N(6)-(1,2-dicarboxyethyl)-AMP + GDP + phosphate + 2 H(+)</text>
        <dbReference type="Rhea" id="RHEA:15753"/>
        <dbReference type="ChEBI" id="CHEBI:15378"/>
        <dbReference type="ChEBI" id="CHEBI:29991"/>
        <dbReference type="ChEBI" id="CHEBI:37565"/>
        <dbReference type="ChEBI" id="CHEBI:43474"/>
        <dbReference type="ChEBI" id="CHEBI:57567"/>
        <dbReference type="ChEBI" id="CHEBI:58053"/>
        <dbReference type="ChEBI" id="CHEBI:58189"/>
        <dbReference type="EC" id="6.3.4.4"/>
    </reaction>
</comment>
<comment type="cofactor">
    <cofactor evidence="1">
        <name>Mg(2+)</name>
        <dbReference type="ChEBI" id="CHEBI:18420"/>
    </cofactor>
    <text evidence="1">Binds 1 Mg(2+) ion per subunit.</text>
</comment>
<comment type="pathway">
    <text evidence="1">Purine metabolism; AMP biosynthesis via de novo pathway; AMP from IMP: step 1/2.</text>
</comment>
<comment type="subunit">
    <text evidence="1">Homodimer.</text>
</comment>
<comment type="subcellular location">
    <subcellularLocation>
        <location evidence="1">Cytoplasm</location>
    </subcellularLocation>
</comment>
<comment type="similarity">
    <text evidence="1">Belongs to the adenylosuccinate synthetase family.</text>
</comment>
<evidence type="ECO:0000255" key="1">
    <source>
        <dbReference type="HAMAP-Rule" id="MF_00011"/>
    </source>
</evidence>
<proteinExistence type="inferred from homology"/>
<gene>
    <name evidence="1" type="primary">purA</name>
    <name type="ordered locus">EAT1b_1751</name>
</gene>
<name>PURA_EXISA</name>